<reference key="1">
    <citation type="journal article" date="2002" name="Science">
        <title>50 million years of genomic stasis in endosymbiotic bacteria.</title>
        <authorList>
            <person name="Tamas I."/>
            <person name="Klasson L."/>
            <person name="Canbaeck B."/>
            <person name="Naeslund A.K."/>
            <person name="Eriksson A.-S."/>
            <person name="Wernegreen J.J."/>
            <person name="Sandstroem J.P."/>
            <person name="Moran N.A."/>
            <person name="Andersson S.G.E."/>
        </authorList>
    </citation>
    <scope>NUCLEOTIDE SEQUENCE [LARGE SCALE GENOMIC DNA]</scope>
    <source>
        <strain>Sg</strain>
    </source>
</reference>
<organism>
    <name type="scientific">Buchnera aphidicola subsp. Schizaphis graminum (strain Sg)</name>
    <dbReference type="NCBI Taxonomy" id="198804"/>
    <lineage>
        <taxon>Bacteria</taxon>
        <taxon>Pseudomonadati</taxon>
        <taxon>Pseudomonadota</taxon>
        <taxon>Gammaproteobacteria</taxon>
        <taxon>Enterobacterales</taxon>
        <taxon>Erwiniaceae</taxon>
        <taxon>Buchnera</taxon>
    </lineage>
</organism>
<dbReference type="EC" id="6.1.1.5" evidence="1"/>
<dbReference type="EMBL" id="AE013218">
    <property type="protein sequence ID" value="AAM67710.1"/>
    <property type="molecule type" value="Genomic_DNA"/>
</dbReference>
<dbReference type="RefSeq" id="WP_011053677.1">
    <property type="nucleotide sequence ID" value="NC_004061.1"/>
</dbReference>
<dbReference type="SMR" id="Q8K9Z2"/>
<dbReference type="STRING" id="198804.BUsg_142"/>
<dbReference type="GeneID" id="93003612"/>
<dbReference type="KEGG" id="bas:BUsg_142"/>
<dbReference type="eggNOG" id="COG0060">
    <property type="taxonomic scope" value="Bacteria"/>
</dbReference>
<dbReference type="HOGENOM" id="CLU_001493_7_0_6"/>
<dbReference type="Proteomes" id="UP000000416">
    <property type="component" value="Chromosome"/>
</dbReference>
<dbReference type="GO" id="GO:0005829">
    <property type="term" value="C:cytosol"/>
    <property type="evidence" value="ECO:0007669"/>
    <property type="project" value="TreeGrafter"/>
</dbReference>
<dbReference type="GO" id="GO:0002161">
    <property type="term" value="F:aminoacyl-tRNA deacylase activity"/>
    <property type="evidence" value="ECO:0007669"/>
    <property type="project" value="InterPro"/>
</dbReference>
<dbReference type="GO" id="GO:0005524">
    <property type="term" value="F:ATP binding"/>
    <property type="evidence" value="ECO:0007669"/>
    <property type="project" value="UniProtKB-UniRule"/>
</dbReference>
<dbReference type="GO" id="GO:0004822">
    <property type="term" value="F:isoleucine-tRNA ligase activity"/>
    <property type="evidence" value="ECO:0007669"/>
    <property type="project" value="UniProtKB-UniRule"/>
</dbReference>
<dbReference type="GO" id="GO:0000049">
    <property type="term" value="F:tRNA binding"/>
    <property type="evidence" value="ECO:0007669"/>
    <property type="project" value="InterPro"/>
</dbReference>
<dbReference type="GO" id="GO:0008270">
    <property type="term" value="F:zinc ion binding"/>
    <property type="evidence" value="ECO:0007669"/>
    <property type="project" value="UniProtKB-UniRule"/>
</dbReference>
<dbReference type="GO" id="GO:0006428">
    <property type="term" value="P:isoleucyl-tRNA aminoacylation"/>
    <property type="evidence" value="ECO:0007669"/>
    <property type="project" value="UniProtKB-UniRule"/>
</dbReference>
<dbReference type="CDD" id="cd07960">
    <property type="entry name" value="Anticodon_Ia_Ile_BEm"/>
    <property type="match status" value="1"/>
</dbReference>
<dbReference type="CDD" id="cd00818">
    <property type="entry name" value="IleRS_core"/>
    <property type="match status" value="1"/>
</dbReference>
<dbReference type="FunFam" id="1.10.730.20:FF:000001">
    <property type="entry name" value="Isoleucine--tRNA ligase"/>
    <property type="match status" value="1"/>
</dbReference>
<dbReference type="FunFam" id="3.40.50.620:FF:000042">
    <property type="entry name" value="Isoleucine--tRNA ligase"/>
    <property type="match status" value="1"/>
</dbReference>
<dbReference type="FunFam" id="3.40.50.620:FF:000048">
    <property type="entry name" value="Isoleucine--tRNA ligase"/>
    <property type="match status" value="1"/>
</dbReference>
<dbReference type="Gene3D" id="1.10.730.20">
    <property type="match status" value="1"/>
</dbReference>
<dbReference type="Gene3D" id="3.40.50.620">
    <property type="entry name" value="HUPs"/>
    <property type="match status" value="2"/>
</dbReference>
<dbReference type="HAMAP" id="MF_02002">
    <property type="entry name" value="Ile_tRNA_synth_type1"/>
    <property type="match status" value="1"/>
</dbReference>
<dbReference type="InterPro" id="IPR001412">
    <property type="entry name" value="aa-tRNA-synth_I_CS"/>
</dbReference>
<dbReference type="InterPro" id="IPR002300">
    <property type="entry name" value="aa-tRNA-synth_Ia"/>
</dbReference>
<dbReference type="InterPro" id="IPR033708">
    <property type="entry name" value="Anticodon_Ile_BEm"/>
</dbReference>
<dbReference type="InterPro" id="IPR002301">
    <property type="entry name" value="Ile-tRNA-ligase"/>
</dbReference>
<dbReference type="InterPro" id="IPR023585">
    <property type="entry name" value="Ile-tRNA-ligase_type1"/>
</dbReference>
<dbReference type="InterPro" id="IPR050081">
    <property type="entry name" value="Ile-tRNA_ligase"/>
</dbReference>
<dbReference type="InterPro" id="IPR013155">
    <property type="entry name" value="M/V/L/I-tRNA-synth_anticd-bd"/>
</dbReference>
<dbReference type="InterPro" id="IPR014729">
    <property type="entry name" value="Rossmann-like_a/b/a_fold"/>
</dbReference>
<dbReference type="InterPro" id="IPR009080">
    <property type="entry name" value="tRNAsynth_Ia_anticodon-bd"/>
</dbReference>
<dbReference type="InterPro" id="IPR009008">
    <property type="entry name" value="Val/Leu/Ile-tRNA-synth_edit"/>
</dbReference>
<dbReference type="NCBIfam" id="TIGR00392">
    <property type="entry name" value="ileS"/>
    <property type="match status" value="1"/>
</dbReference>
<dbReference type="PANTHER" id="PTHR42765:SF1">
    <property type="entry name" value="ISOLEUCINE--TRNA LIGASE, MITOCHONDRIAL"/>
    <property type="match status" value="1"/>
</dbReference>
<dbReference type="PANTHER" id="PTHR42765">
    <property type="entry name" value="SOLEUCYL-TRNA SYNTHETASE"/>
    <property type="match status" value="1"/>
</dbReference>
<dbReference type="Pfam" id="PF08264">
    <property type="entry name" value="Anticodon_1"/>
    <property type="match status" value="1"/>
</dbReference>
<dbReference type="Pfam" id="PF00133">
    <property type="entry name" value="tRNA-synt_1"/>
    <property type="match status" value="1"/>
</dbReference>
<dbReference type="PRINTS" id="PR00984">
    <property type="entry name" value="TRNASYNTHILE"/>
</dbReference>
<dbReference type="SUPFAM" id="SSF47323">
    <property type="entry name" value="Anticodon-binding domain of a subclass of class I aminoacyl-tRNA synthetases"/>
    <property type="match status" value="1"/>
</dbReference>
<dbReference type="SUPFAM" id="SSF52374">
    <property type="entry name" value="Nucleotidylyl transferase"/>
    <property type="match status" value="1"/>
</dbReference>
<dbReference type="SUPFAM" id="SSF50677">
    <property type="entry name" value="ValRS/IleRS/LeuRS editing domain"/>
    <property type="match status" value="1"/>
</dbReference>
<dbReference type="PROSITE" id="PS00178">
    <property type="entry name" value="AA_TRNA_LIGASE_I"/>
    <property type="match status" value="1"/>
</dbReference>
<feature type="chain" id="PRO_0000098367" description="Isoleucine--tRNA ligase">
    <location>
        <begin position="1"/>
        <end position="938"/>
    </location>
</feature>
<feature type="short sequence motif" description="'HIGH' region">
    <location>
        <begin position="58"/>
        <end position="68"/>
    </location>
</feature>
<feature type="short sequence motif" description="'KMSKS' region">
    <location>
        <begin position="604"/>
        <end position="608"/>
    </location>
</feature>
<feature type="binding site" evidence="1">
    <location>
        <position position="563"/>
    </location>
    <ligand>
        <name>L-isoleucyl-5'-AMP</name>
        <dbReference type="ChEBI" id="CHEBI:178002"/>
    </ligand>
</feature>
<feature type="binding site" evidence="1">
    <location>
        <position position="607"/>
    </location>
    <ligand>
        <name>ATP</name>
        <dbReference type="ChEBI" id="CHEBI:30616"/>
    </ligand>
</feature>
<feature type="binding site" evidence="1">
    <location>
        <position position="903"/>
    </location>
    <ligand>
        <name>Zn(2+)</name>
        <dbReference type="ChEBI" id="CHEBI:29105"/>
    </ligand>
</feature>
<feature type="binding site" evidence="1">
    <location>
        <position position="906"/>
    </location>
    <ligand>
        <name>Zn(2+)</name>
        <dbReference type="ChEBI" id="CHEBI:29105"/>
    </ligand>
</feature>
<feature type="binding site" evidence="1">
    <location>
        <position position="921"/>
    </location>
    <ligand>
        <name>Zn(2+)</name>
        <dbReference type="ChEBI" id="CHEBI:29105"/>
    </ligand>
</feature>
<feature type="binding site" evidence="1">
    <location>
        <position position="924"/>
    </location>
    <ligand>
        <name>Zn(2+)</name>
        <dbReference type="ChEBI" id="CHEBI:29105"/>
    </ligand>
</feature>
<keyword id="KW-0030">Aminoacyl-tRNA synthetase</keyword>
<keyword id="KW-0067">ATP-binding</keyword>
<keyword id="KW-0963">Cytoplasm</keyword>
<keyword id="KW-0436">Ligase</keyword>
<keyword id="KW-0479">Metal-binding</keyword>
<keyword id="KW-0547">Nucleotide-binding</keyword>
<keyword id="KW-0648">Protein biosynthesis</keyword>
<keyword id="KW-0862">Zinc</keyword>
<comment type="function">
    <text evidence="1">Catalyzes the attachment of isoleucine to tRNA(Ile). As IleRS can inadvertently accommodate and process structurally similar amino acids such as valine, to avoid such errors it has two additional distinct tRNA(Ile)-dependent editing activities. One activity is designated as 'pretransfer' editing and involves the hydrolysis of activated Val-AMP. The other activity is designated 'posttransfer' editing and involves deacylation of mischarged Val-tRNA(Ile).</text>
</comment>
<comment type="catalytic activity">
    <reaction evidence="1">
        <text>tRNA(Ile) + L-isoleucine + ATP = L-isoleucyl-tRNA(Ile) + AMP + diphosphate</text>
        <dbReference type="Rhea" id="RHEA:11060"/>
        <dbReference type="Rhea" id="RHEA-COMP:9666"/>
        <dbReference type="Rhea" id="RHEA-COMP:9695"/>
        <dbReference type="ChEBI" id="CHEBI:30616"/>
        <dbReference type="ChEBI" id="CHEBI:33019"/>
        <dbReference type="ChEBI" id="CHEBI:58045"/>
        <dbReference type="ChEBI" id="CHEBI:78442"/>
        <dbReference type="ChEBI" id="CHEBI:78528"/>
        <dbReference type="ChEBI" id="CHEBI:456215"/>
        <dbReference type="EC" id="6.1.1.5"/>
    </reaction>
</comment>
<comment type="cofactor">
    <cofactor evidence="1">
        <name>Zn(2+)</name>
        <dbReference type="ChEBI" id="CHEBI:29105"/>
    </cofactor>
    <text evidence="1">Binds 1 zinc ion per subunit.</text>
</comment>
<comment type="subunit">
    <text evidence="1">Monomer.</text>
</comment>
<comment type="subcellular location">
    <subcellularLocation>
        <location evidence="1">Cytoplasm</location>
    </subcellularLocation>
</comment>
<comment type="domain">
    <text evidence="1">IleRS has two distinct active sites: one for aminoacylation and one for editing. The misactivated valine is translocated from the active site to the editing site, which sterically excludes the correctly activated isoleucine. The single editing site contains two valyl binding pockets, one specific for each substrate (Val-AMP or Val-tRNA(Ile)).</text>
</comment>
<comment type="similarity">
    <text evidence="1">Belongs to the class-I aminoacyl-tRNA synthetase family. IleS type 1 subfamily.</text>
</comment>
<gene>
    <name evidence="1" type="primary">ileS</name>
    <name type="ordered locus">BUsg_142</name>
</gene>
<name>SYI_BUCAP</name>
<accession>Q8K9Z2</accession>
<protein>
    <recommendedName>
        <fullName evidence="1">Isoleucine--tRNA ligase</fullName>
        <ecNumber evidence="1">6.1.1.5</ecNumber>
    </recommendedName>
    <alternativeName>
        <fullName evidence="1">Isoleucyl-tRNA synthetase</fullName>
        <shortName evidence="1">IleRS</shortName>
    </alternativeName>
</protein>
<evidence type="ECO:0000255" key="1">
    <source>
        <dbReference type="HAMAP-Rule" id="MF_02002"/>
    </source>
</evidence>
<sequence>MNDYKNTLNLPKTQFSMRANLSQKEPKILKNWYDNNLYKLIRQKKEGKKIFFLHDGPPYANGNIHIGHAVNKILKDIIIKSKNMSGFDAPYIPSWDCHGLPIEQKVEEQMGLKSNNIITTIFQKKCRKYAEKQIKKQKKDFIRLGVIGDWENAHLTMDFKNEANIIKTLSKIIEKKYLYKESKPIHWCLKCYSSLSDAEIEHFDKESDSIFVAIKSKNNKILKEVLNLNISSEKDIYLPIWTTTPWTLPSSQAITVNPIFEYQIIETKKYNLILAKELVKNVMKILEINHWNILSSFKGKILEGKKFLHPFLENISLPVILGDHVNLDSGTGAVHTAPDHGPDDYIVSQKYKIKTMNLVDFKGNYINNIHPKLNGVNIFQANEIIINLLIKKDCLLHHNILKHSYPHCWRHKTPVIFRATEQWFINIDQKKLRYKTLEEIKKVSWIPKWGGSRIEEMIKKRPDWCVSRQRKWGVPMCLFLHKKTGKIHPENTLLIKKIIKKVELEGIEAWWKINLKEMLGETYNMYNQTFDILDVWFESGNTHTVIKYKNKKYSKNHADMFLEGSDQHRGWFMSSLIISMLVKNQSPYSEVLTHGFVVDKNGQKMSKSIGNTISPNEVVKTLGGDILRLWVASSNYSNDISISNEILKRSSDIYRRIRNTARFMLANINDFNPQKNTVLKENMVLLDRWAISQAKIVQEEIIEFYKKYNFHAIIKRLMYFCSIEMGSFYLDIIKDRQYTLKTNSQERRSCQTAIYYIINALVRWIAPILSFTADEIWNHLPGKHAQYVFTEEWFNKLFDLDKNDLFNREFWKNLIEMKNEINKFLETEIKNKNINNSLEACLILYVTPEVKKTLNILGEELKFIFLTSKVKIELYNTAPINSTKSKKISNFKIFLKKIKEKKCPRCWHYNIFIENNNDKICTRCILNTKGNGEKRFFI</sequence>
<proteinExistence type="inferred from homology"/>